<comment type="function">
    <text evidence="1">Cleaves peptides in various proteins in a process that requires ATP hydrolysis. Has a chymotrypsin-like activity. Plays a major role in the degradation of misfolded proteins. ClpXP is involved in the complete degradation of the Site-2 clipped anti-sigma-W factor RsiW. This results in the release of SigW and the transcription activation of the genes under the control of the sigma-W factor (By similarity).</text>
</comment>
<comment type="catalytic activity">
    <reaction evidence="1">
        <text>Hydrolysis of proteins to small peptides in the presence of ATP and magnesium. alpha-casein is the usual test substrate. In the absence of ATP, only oligopeptides shorter than five residues are hydrolyzed (such as succinyl-Leu-Tyr-|-NHMec, and Leu-Tyr-Leu-|-Tyr-Trp, in which cleavage of the -Tyr-|-Leu- and -Tyr-|-Trp bonds also occurs).</text>
        <dbReference type="EC" id="3.4.21.92"/>
    </reaction>
</comment>
<comment type="subunit">
    <text evidence="1">Fourteen ClpP subunits assemble into 2 heptameric rings which stack back to back to give a disk-like structure with a central cavity, resembling the structure of eukaryotic proteasomes.</text>
</comment>
<comment type="subcellular location">
    <subcellularLocation>
        <location evidence="1">Cytoplasm</location>
    </subcellularLocation>
</comment>
<comment type="similarity">
    <text evidence="1">Belongs to the peptidase S14 family.</text>
</comment>
<gene>
    <name evidence="1" type="primary">clpP</name>
    <name type="ordered locus">OB2456</name>
</gene>
<organism>
    <name type="scientific">Oceanobacillus iheyensis (strain DSM 14371 / CIP 107618 / JCM 11309 / KCTC 3954 / HTE831)</name>
    <dbReference type="NCBI Taxonomy" id="221109"/>
    <lineage>
        <taxon>Bacteria</taxon>
        <taxon>Bacillati</taxon>
        <taxon>Bacillota</taxon>
        <taxon>Bacilli</taxon>
        <taxon>Bacillales</taxon>
        <taxon>Bacillaceae</taxon>
        <taxon>Oceanobacillus</taxon>
    </lineage>
</organism>
<sequence>MNLVPTVIEQTNRGERAYDIYSRLLKDRIILLGSGIDDNVSNSIVAQLLFLEAEDPDKDISLYINSPGGSITAGMAIYDTMNFIKPNVSTICIGMAASMGAFLLTAGEKGKRFALPNSEIMIHQPLGGTQGQATDIEIHAKRIIDIKRRMNEIMAEKTGQPIEVIERDTERDNFMTADQSVEYGLIDKILERK</sequence>
<feature type="chain" id="PRO_0000179607" description="ATP-dependent Clp protease proteolytic subunit">
    <location>
        <begin position="1"/>
        <end position="193"/>
    </location>
</feature>
<feature type="active site" description="Nucleophile" evidence="1">
    <location>
        <position position="98"/>
    </location>
</feature>
<feature type="active site" evidence="1">
    <location>
        <position position="123"/>
    </location>
</feature>
<evidence type="ECO:0000255" key="1">
    <source>
        <dbReference type="HAMAP-Rule" id="MF_00444"/>
    </source>
</evidence>
<reference key="1">
    <citation type="journal article" date="2002" name="Nucleic Acids Res.">
        <title>Genome sequence of Oceanobacillus iheyensis isolated from the Iheya Ridge and its unexpected adaptive capabilities to extreme environments.</title>
        <authorList>
            <person name="Takami H."/>
            <person name="Takaki Y."/>
            <person name="Uchiyama I."/>
        </authorList>
    </citation>
    <scope>NUCLEOTIDE SEQUENCE [LARGE SCALE GENOMIC DNA]</scope>
    <source>
        <strain>DSM 14371 / CIP 107618 / JCM 11309 / KCTC 3954 / HTE831</strain>
    </source>
</reference>
<keyword id="KW-0963">Cytoplasm</keyword>
<keyword id="KW-0378">Hydrolase</keyword>
<keyword id="KW-0645">Protease</keyword>
<keyword id="KW-1185">Reference proteome</keyword>
<keyword id="KW-0720">Serine protease</keyword>
<protein>
    <recommendedName>
        <fullName evidence="1">ATP-dependent Clp protease proteolytic subunit</fullName>
        <ecNumber evidence="1">3.4.21.92</ecNumber>
    </recommendedName>
    <alternativeName>
        <fullName evidence="1">Endopeptidase Clp</fullName>
    </alternativeName>
</protein>
<proteinExistence type="inferred from homology"/>
<dbReference type="EC" id="3.4.21.92" evidence="1"/>
<dbReference type="EMBL" id="BA000028">
    <property type="protein sequence ID" value="BAC14412.1"/>
    <property type="molecule type" value="Genomic_DNA"/>
</dbReference>
<dbReference type="RefSeq" id="WP_011066849.1">
    <property type="nucleotide sequence ID" value="NC_004193.1"/>
</dbReference>
<dbReference type="SMR" id="Q8ENM5"/>
<dbReference type="STRING" id="221109.gene:10734708"/>
<dbReference type="MEROPS" id="S14.001"/>
<dbReference type="KEGG" id="oih:OB2456"/>
<dbReference type="eggNOG" id="COG0740">
    <property type="taxonomic scope" value="Bacteria"/>
</dbReference>
<dbReference type="HOGENOM" id="CLU_058707_3_2_9"/>
<dbReference type="OrthoDB" id="9802800at2"/>
<dbReference type="PhylomeDB" id="Q8ENM5"/>
<dbReference type="Proteomes" id="UP000000822">
    <property type="component" value="Chromosome"/>
</dbReference>
<dbReference type="GO" id="GO:0005737">
    <property type="term" value="C:cytoplasm"/>
    <property type="evidence" value="ECO:0007669"/>
    <property type="project" value="UniProtKB-SubCell"/>
</dbReference>
<dbReference type="GO" id="GO:0009368">
    <property type="term" value="C:endopeptidase Clp complex"/>
    <property type="evidence" value="ECO:0007669"/>
    <property type="project" value="TreeGrafter"/>
</dbReference>
<dbReference type="GO" id="GO:0004176">
    <property type="term" value="F:ATP-dependent peptidase activity"/>
    <property type="evidence" value="ECO:0007669"/>
    <property type="project" value="InterPro"/>
</dbReference>
<dbReference type="GO" id="GO:0051117">
    <property type="term" value="F:ATPase binding"/>
    <property type="evidence" value="ECO:0007669"/>
    <property type="project" value="TreeGrafter"/>
</dbReference>
<dbReference type="GO" id="GO:0004252">
    <property type="term" value="F:serine-type endopeptidase activity"/>
    <property type="evidence" value="ECO:0007669"/>
    <property type="project" value="UniProtKB-UniRule"/>
</dbReference>
<dbReference type="GO" id="GO:0006515">
    <property type="term" value="P:protein quality control for misfolded or incompletely synthesized proteins"/>
    <property type="evidence" value="ECO:0007669"/>
    <property type="project" value="TreeGrafter"/>
</dbReference>
<dbReference type="CDD" id="cd07017">
    <property type="entry name" value="S14_ClpP_2"/>
    <property type="match status" value="1"/>
</dbReference>
<dbReference type="FunFam" id="3.90.226.10:FF:000001">
    <property type="entry name" value="ATP-dependent Clp protease proteolytic subunit"/>
    <property type="match status" value="1"/>
</dbReference>
<dbReference type="Gene3D" id="3.90.226.10">
    <property type="entry name" value="2-enoyl-CoA Hydratase, Chain A, domain 1"/>
    <property type="match status" value="1"/>
</dbReference>
<dbReference type="HAMAP" id="MF_00444">
    <property type="entry name" value="ClpP"/>
    <property type="match status" value="1"/>
</dbReference>
<dbReference type="InterPro" id="IPR001907">
    <property type="entry name" value="ClpP"/>
</dbReference>
<dbReference type="InterPro" id="IPR029045">
    <property type="entry name" value="ClpP/crotonase-like_dom_sf"/>
</dbReference>
<dbReference type="InterPro" id="IPR023562">
    <property type="entry name" value="ClpP/TepA"/>
</dbReference>
<dbReference type="InterPro" id="IPR033135">
    <property type="entry name" value="ClpP_His_AS"/>
</dbReference>
<dbReference type="InterPro" id="IPR018215">
    <property type="entry name" value="ClpP_Ser_AS"/>
</dbReference>
<dbReference type="NCBIfam" id="TIGR00493">
    <property type="entry name" value="clpP"/>
    <property type="match status" value="1"/>
</dbReference>
<dbReference type="NCBIfam" id="NF001368">
    <property type="entry name" value="PRK00277.1"/>
    <property type="match status" value="1"/>
</dbReference>
<dbReference type="NCBIfam" id="NF009205">
    <property type="entry name" value="PRK12553.1"/>
    <property type="match status" value="1"/>
</dbReference>
<dbReference type="PANTHER" id="PTHR10381">
    <property type="entry name" value="ATP-DEPENDENT CLP PROTEASE PROTEOLYTIC SUBUNIT"/>
    <property type="match status" value="1"/>
</dbReference>
<dbReference type="PANTHER" id="PTHR10381:SF70">
    <property type="entry name" value="ATP-DEPENDENT CLP PROTEASE PROTEOLYTIC SUBUNIT"/>
    <property type="match status" value="1"/>
</dbReference>
<dbReference type="Pfam" id="PF00574">
    <property type="entry name" value="CLP_protease"/>
    <property type="match status" value="1"/>
</dbReference>
<dbReference type="PRINTS" id="PR00127">
    <property type="entry name" value="CLPPROTEASEP"/>
</dbReference>
<dbReference type="SUPFAM" id="SSF52096">
    <property type="entry name" value="ClpP/crotonase"/>
    <property type="match status" value="1"/>
</dbReference>
<dbReference type="PROSITE" id="PS00382">
    <property type="entry name" value="CLP_PROTEASE_HIS"/>
    <property type="match status" value="1"/>
</dbReference>
<dbReference type="PROSITE" id="PS00381">
    <property type="entry name" value="CLP_PROTEASE_SER"/>
    <property type="match status" value="1"/>
</dbReference>
<name>CLPP_OCEIH</name>
<accession>Q8ENM5</accession>